<name>ATP8_EMENI</name>
<organism>
    <name type="scientific">Emericella nidulans (strain FGSC A4 / ATCC 38163 / CBS 112.46 / NRRL 194 / M139)</name>
    <name type="common">Aspergillus nidulans</name>
    <dbReference type="NCBI Taxonomy" id="227321"/>
    <lineage>
        <taxon>Eukaryota</taxon>
        <taxon>Fungi</taxon>
        <taxon>Dikarya</taxon>
        <taxon>Ascomycota</taxon>
        <taxon>Pezizomycotina</taxon>
        <taxon>Eurotiomycetes</taxon>
        <taxon>Eurotiomycetidae</taxon>
        <taxon>Eurotiales</taxon>
        <taxon>Aspergillaceae</taxon>
        <taxon>Aspergillus</taxon>
        <taxon>Aspergillus subgen. Nidulantes</taxon>
    </lineage>
</organism>
<comment type="function">
    <text evidence="1">Mitochondrial membrane ATP synthase (F(1)F(0) ATP synthase or Complex V) produces ATP from ADP in the presence of a proton gradient across the membrane which is generated by electron transport complexes of the respiratory chain. F-type ATPases consist of two structural domains, F(1) - containing the extramembraneous catalytic core and F(0) - containing the membrane proton channel, linked together by a central stalk and a peripheral stalk. During catalysis, ATP synthesis in the catalytic domain of F(1) is coupled via a rotary mechanism of the central stalk subunits to proton translocation. Part of the complex F(0) domain. Minor subunit located with subunit a in the membrane (By similarity).</text>
</comment>
<comment type="subunit">
    <text evidence="1">F-type ATPases have 2 components, CF(1) - the catalytic core - and CF(0) - the membrane proton channel.</text>
</comment>
<comment type="subcellular location">
    <subcellularLocation>
        <location>Mitochondrion membrane</location>
        <topology>Single-pass membrane protein</topology>
    </subcellularLocation>
</comment>
<comment type="similarity">
    <text evidence="3">Belongs to the ATPase protein 8 family.</text>
</comment>
<sequence>MPQLVPFFFVNQVVFAFIVLTVLIYAFSKYILPRLLRTYISRIYINKL</sequence>
<geneLocation type="mitochondrion"/>
<feature type="chain" id="PRO_0000195599" description="ATP synthase protein 8">
    <location>
        <begin position="1"/>
        <end position="48"/>
    </location>
</feature>
<feature type="transmembrane region" description="Helical" evidence="2">
    <location>
        <begin position="4"/>
        <end position="24"/>
    </location>
</feature>
<evidence type="ECO:0000250" key="1"/>
<evidence type="ECO:0000255" key="2"/>
<evidence type="ECO:0000305" key="3"/>
<keyword id="KW-0066">ATP synthesis</keyword>
<keyword id="KW-0138">CF(0)</keyword>
<keyword id="KW-0375">Hydrogen ion transport</keyword>
<keyword id="KW-0406">Ion transport</keyword>
<keyword id="KW-0472">Membrane</keyword>
<keyword id="KW-0496">Mitochondrion</keyword>
<keyword id="KW-1185">Reference proteome</keyword>
<keyword id="KW-0812">Transmembrane</keyword>
<keyword id="KW-1133">Transmembrane helix</keyword>
<keyword id="KW-0813">Transport</keyword>
<reference key="1">
    <citation type="journal article" date="2005" name="Nature">
        <title>Sequencing of Aspergillus nidulans and comparative analysis with A. fumigatus and A. oryzae.</title>
        <authorList>
            <person name="Galagan J.E."/>
            <person name="Calvo S.E."/>
            <person name="Cuomo C."/>
            <person name="Ma L.-J."/>
            <person name="Wortman J.R."/>
            <person name="Batzoglou S."/>
            <person name="Lee S.-I."/>
            <person name="Bastuerkmen M."/>
            <person name="Spevak C.C."/>
            <person name="Clutterbuck J."/>
            <person name="Kapitonov V."/>
            <person name="Jurka J."/>
            <person name="Scazzocchio C."/>
            <person name="Farman M.L."/>
            <person name="Butler J."/>
            <person name="Purcell S."/>
            <person name="Harris S."/>
            <person name="Braus G.H."/>
            <person name="Draht O."/>
            <person name="Busch S."/>
            <person name="D'Enfert C."/>
            <person name="Bouchier C."/>
            <person name="Goldman G.H."/>
            <person name="Bell-Pedersen D."/>
            <person name="Griffiths-Jones S."/>
            <person name="Doonan J.H."/>
            <person name="Yu J."/>
            <person name="Vienken K."/>
            <person name="Pain A."/>
            <person name="Freitag M."/>
            <person name="Selker E.U."/>
            <person name="Archer D.B."/>
            <person name="Penalva M.A."/>
            <person name="Oakley B.R."/>
            <person name="Momany M."/>
            <person name="Tanaka T."/>
            <person name="Kumagai T."/>
            <person name="Asai K."/>
            <person name="Machida M."/>
            <person name="Nierman W.C."/>
            <person name="Denning D.W."/>
            <person name="Caddick M.X."/>
            <person name="Hynes M."/>
            <person name="Paoletti M."/>
            <person name="Fischer R."/>
            <person name="Miller B.L."/>
            <person name="Dyer P.S."/>
            <person name="Sachs M.S."/>
            <person name="Osmani S.A."/>
            <person name="Birren B.W."/>
        </authorList>
    </citation>
    <scope>NUCLEOTIDE SEQUENCE [LARGE SCALE GENOMIC DNA]</scope>
    <source>
        <strain>FGSC A4 / ATCC 38163 / CBS 112.46 / NRRL 194 / M139</strain>
    </source>
</reference>
<reference key="2">
    <citation type="submission" date="2012-01" db="EMBL/GenBank/DDBJ databases">
        <title>The finished mitochondrial sequence of Aspergillus nidulans FGSC A4.</title>
        <authorList>
            <consortium name="The Broad Institute Genome Sequencing Platform"/>
            <person name="Wortman J.R."/>
            <person name="Cuomo C."/>
            <person name="Hostetler J."/>
            <person name="Joardar V.J."/>
            <person name="Mounaud S."/>
            <person name="Onuska J."/>
            <person name="Nierman W.C."/>
            <person name="Fedorova N.D."/>
            <person name="Young S.K."/>
            <person name="Zeng Q."/>
            <person name="Gargeya S."/>
            <person name="Fitzgerald M."/>
            <person name="Haas B."/>
            <person name="Abouelleil A."/>
            <person name="Alvarado L."/>
            <person name="Arachchi H.M."/>
            <person name="Berlin A."/>
            <person name="Brown A."/>
            <person name="Chapman S.B."/>
            <person name="Chen Z."/>
            <person name="Dunbar C."/>
            <person name="Freedman E."/>
            <person name="Gearin G."/>
            <person name="Gellesch M."/>
            <person name="Goldberg J."/>
            <person name="Griggs A."/>
            <person name="Gujja S."/>
            <person name="Heiman D."/>
            <person name="Howarth C."/>
            <person name="Larson L."/>
            <person name="Lui A."/>
            <person name="MacDonald P.J.P."/>
            <person name="Montmayeur A."/>
            <person name="Murphy C."/>
            <person name="Neiman D."/>
            <person name="Pearson M."/>
            <person name="Priest M."/>
            <person name="Roberts A."/>
            <person name="Saif S."/>
            <person name="Shea T."/>
            <person name="Shenoy N."/>
            <person name="Sisk P."/>
            <person name="Stolte C."/>
            <person name="Sykes S."/>
            <person name="Nusbaum C."/>
            <person name="Birren B.W."/>
        </authorList>
    </citation>
    <scope>NUCLEOTIDE SEQUENCE [LARGE SCALE GENOMIC DNA]</scope>
    <source>
        <strain>FGSC A4 / ATCC 38163 / CBS 112.46 / NRRL 194 / M139</strain>
    </source>
</reference>
<gene>
    <name type="primary">atp8</name>
    <name type="ORF">AN20009</name>
    <name type="ORF">AN9455</name>
</gene>
<dbReference type="EMBL" id="AACD01000188">
    <property type="protein sequence ID" value="EAA66805.1"/>
    <property type="molecule type" value="Genomic_DNA"/>
</dbReference>
<dbReference type="EMBL" id="JQ435097">
    <property type="protein sequence ID" value="AFC69015.1"/>
    <property type="molecule type" value="Genomic_DNA"/>
</dbReference>
<dbReference type="RefSeq" id="XP_868837.1">
    <property type="nucleotide sequence ID" value="XM_863744.1"/>
</dbReference>
<dbReference type="RefSeq" id="YP_006303575.1">
    <property type="nucleotide sequence ID" value="NC_017896.1"/>
</dbReference>
<dbReference type="SMR" id="P0CY41"/>
<dbReference type="FunCoup" id="P0CY41">
    <property type="interactions" value="78"/>
</dbReference>
<dbReference type="STRING" id="227321.P0CY41"/>
<dbReference type="KEGG" id="ani:ANID_20009"/>
<dbReference type="VEuPathDB" id="FungiDB:AN20009"/>
<dbReference type="HOGENOM" id="CLU_214588_0_0_1"/>
<dbReference type="InParanoid" id="P0CY41"/>
<dbReference type="Proteomes" id="UP000000560">
    <property type="component" value="Mitochondrion"/>
</dbReference>
<dbReference type="GO" id="GO:0031966">
    <property type="term" value="C:mitochondrial membrane"/>
    <property type="evidence" value="ECO:0007669"/>
    <property type="project" value="UniProtKB-SubCell"/>
</dbReference>
<dbReference type="GO" id="GO:0005739">
    <property type="term" value="C:mitochondrion"/>
    <property type="evidence" value="ECO:0000305"/>
    <property type="project" value="UniProtKB"/>
</dbReference>
<dbReference type="GO" id="GO:0045259">
    <property type="term" value="C:proton-transporting ATP synthase complex"/>
    <property type="evidence" value="ECO:0000316"/>
    <property type="project" value="UniProtKB"/>
</dbReference>
<dbReference type="GO" id="GO:0015078">
    <property type="term" value="F:proton transmembrane transporter activity"/>
    <property type="evidence" value="ECO:0007669"/>
    <property type="project" value="InterPro"/>
</dbReference>
<dbReference type="GO" id="GO:0015986">
    <property type="term" value="P:proton motive force-driven ATP synthesis"/>
    <property type="evidence" value="ECO:0000316"/>
    <property type="project" value="AspGD"/>
</dbReference>
<dbReference type="InterPro" id="IPR009230">
    <property type="entry name" value="ATP_synth_su8_fun"/>
</dbReference>
<dbReference type="PANTHER" id="PTHR36101">
    <property type="entry name" value="ATP SYNTHASE PROTEIN 8"/>
    <property type="match status" value="1"/>
</dbReference>
<dbReference type="PANTHER" id="PTHR36101:SF1">
    <property type="entry name" value="ATP SYNTHASE PROTEIN 8"/>
    <property type="match status" value="1"/>
</dbReference>
<dbReference type="Pfam" id="PF05933">
    <property type="entry name" value="Fun_ATP-synt_8"/>
    <property type="match status" value="1"/>
</dbReference>
<protein>
    <recommendedName>
        <fullName>ATP synthase protein 8</fullName>
    </recommendedName>
    <alternativeName>
        <fullName>A6L</fullName>
    </alternativeName>
    <alternativeName>
        <fullName>F-ATPase subunit 8</fullName>
    </alternativeName>
</protein>
<accession>P0CY41</accession>
<accession>H9D0P0</accession>
<accession>P00857</accession>
<accession>Q5AQH5</accession>
<proteinExistence type="inferred from homology"/>